<accession>Q8XBY2</accession>
<keyword id="KW-0186">Copper</keyword>
<keyword id="KW-0479">Metal-binding</keyword>
<keyword id="KW-0574">Periplasm</keyword>
<keyword id="KW-1185">Reference proteome</keyword>
<keyword id="KW-0732">Signal</keyword>
<proteinExistence type="inferred from homology"/>
<gene>
    <name type="primary">cusF</name>
    <name type="ordered locus">Z0712</name>
    <name type="ordered locus">ECs0611</name>
</gene>
<sequence>MKKALQVAMFSLFTVIGFNAQANEHHHETMSEAQPQVISATGVVKGFDLESKKITIHHDPIAAVNWPEMTMRFTITPQTKMSGIKTGDKVAFNFVQQGNLSLLQDIKVSQ</sequence>
<dbReference type="EMBL" id="AE005174">
    <property type="protein sequence ID" value="AAG54906.1"/>
    <property type="molecule type" value="Genomic_DNA"/>
</dbReference>
<dbReference type="EMBL" id="BA000007">
    <property type="protein sequence ID" value="BAB34034.1"/>
    <property type="molecule type" value="Genomic_DNA"/>
</dbReference>
<dbReference type="PIR" id="C90705">
    <property type="entry name" value="C90705"/>
</dbReference>
<dbReference type="PIR" id="F85555">
    <property type="entry name" value="F85555"/>
</dbReference>
<dbReference type="RefSeq" id="NP_308638.1">
    <property type="nucleotide sequence ID" value="NC_002695.1"/>
</dbReference>
<dbReference type="RefSeq" id="WP_000709868.1">
    <property type="nucleotide sequence ID" value="NZ_VOAI01000012.1"/>
</dbReference>
<dbReference type="SMR" id="Q8XBY2"/>
<dbReference type="STRING" id="155864.Z0712"/>
<dbReference type="GeneID" id="916969"/>
<dbReference type="KEGG" id="ece:Z0712"/>
<dbReference type="KEGG" id="ecs:ECs_0611"/>
<dbReference type="PATRIC" id="fig|386585.9.peg.719"/>
<dbReference type="eggNOG" id="COG5569">
    <property type="taxonomic scope" value="Bacteria"/>
</dbReference>
<dbReference type="HOGENOM" id="CLU_140852_2_1_6"/>
<dbReference type="OMA" id="MHEQPAA"/>
<dbReference type="Proteomes" id="UP000000558">
    <property type="component" value="Chromosome"/>
</dbReference>
<dbReference type="Proteomes" id="UP000002519">
    <property type="component" value="Chromosome"/>
</dbReference>
<dbReference type="GO" id="GO:0042597">
    <property type="term" value="C:periplasmic space"/>
    <property type="evidence" value="ECO:0007669"/>
    <property type="project" value="UniProtKB-SubCell"/>
</dbReference>
<dbReference type="GO" id="GO:0046872">
    <property type="term" value="F:metal ion binding"/>
    <property type="evidence" value="ECO:0007669"/>
    <property type="project" value="UniProtKB-KW"/>
</dbReference>
<dbReference type="Gene3D" id="2.40.50.320">
    <property type="entry name" value="Copper binding periplasmic protein CusF"/>
    <property type="match status" value="1"/>
</dbReference>
<dbReference type="InterPro" id="IPR021647">
    <property type="entry name" value="CusF_Ec"/>
</dbReference>
<dbReference type="InterPro" id="IPR042230">
    <property type="entry name" value="CusF_sf"/>
</dbReference>
<dbReference type="NCBIfam" id="NF007348">
    <property type="entry name" value="PRK09838.1"/>
    <property type="match status" value="1"/>
</dbReference>
<dbReference type="Pfam" id="PF11604">
    <property type="entry name" value="CusF_Ec"/>
    <property type="match status" value="1"/>
</dbReference>
<reference key="1">
    <citation type="journal article" date="2001" name="Nature">
        <title>Genome sequence of enterohaemorrhagic Escherichia coli O157:H7.</title>
        <authorList>
            <person name="Perna N.T."/>
            <person name="Plunkett G. III"/>
            <person name="Burland V."/>
            <person name="Mau B."/>
            <person name="Glasner J.D."/>
            <person name="Rose D.J."/>
            <person name="Mayhew G.F."/>
            <person name="Evans P.S."/>
            <person name="Gregor J."/>
            <person name="Kirkpatrick H.A."/>
            <person name="Posfai G."/>
            <person name="Hackett J."/>
            <person name="Klink S."/>
            <person name="Boutin A."/>
            <person name="Shao Y."/>
            <person name="Miller L."/>
            <person name="Grotbeck E.J."/>
            <person name="Davis N.W."/>
            <person name="Lim A."/>
            <person name="Dimalanta E.T."/>
            <person name="Potamousis K."/>
            <person name="Apodaca J."/>
            <person name="Anantharaman T.S."/>
            <person name="Lin J."/>
            <person name="Yen G."/>
            <person name="Schwartz D.C."/>
            <person name="Welch R.A."/>
            <person name="Blattner F.R."/>
        </authorList>
    </citation>
    <scope>NUCLEOTIDE SEQUENCE [LARGE SCALE GENOMIC DNA]</scope>
    <source>
        <strain>O157:H7 / EDL933 / ATCC 700927 / EHEC</strain>
    </source>
</reference>
<reference key="2">
    <citation type="journal article" date="2001" name="DNA Res.">
        <title>Complete genome sequence of enterohemorrhagic Escherichia coli O157:H7 and genomic comparison with a laboratory strain K-12.</title>
        <authorList>
            <person name="Hayashi T."/>
            <person name="Makino K."/>
            <person name="Ohnishi M."/>
            <person name="Kurokawa K."/>
            <person name="Ishii K."/>
            <person name="Yokoyama K."/>
            <person name="Han C.-G."/>
            <person name="Ohtsubo E."/>
            <person name="Nakayama K."/>
            <person name="Murata T."/>
            <person name="Tanaka M."/>
            <person name="Tobe T."/>
            <person name="Iida T."/>
            <person name="Takami H."/>
            <person name="Honda T."/>
            <person name="Sasakawa C."/>
            <person name="Ogasawara N."/>
            <person name="Yasunaga T."/>
            <person name="Kuhara S."/>
            <person name="Shiba T."/>
            <person name="Hattori M."/>
            <person name="Shinagawa H."/>
        </authorList>
    </citation>
    <scope>NUCLEOTIDE SEQUENCE [LARGE SCALE GENOMIC DNA]</scope>
    <source>
        <strain>O157:H7 / Sakai / RIMD 0509952 / EHEC</strain>
    </source>
</reference>
<comment type="function">
    <text evidence="1">Part of a cation efflux system that mediates resistance to copper and silver. Binds one copper per polypeptide (By similarity).</text>
</comment>
<comment type="subunit">
    <text evidence="1">The cus efflux system is composed of CusA, CusB, CusC and CusF.</text>
</comment>
<comment type="subcellular location">
    <subcellularLocation>
        <location evidence="1">Periplasm</location>
    </subcellularLocation>
</comment>
<comment type="induction">
    <text evidence="2">Transcriptionally regulated by CusR in response to copper and silver ions.</text>
</comment>
<protein>
    <recommendedName>
        <fullName>Cation efflux system protein CusF</fullName>
    </recommendedName>
</protein>
<organism>
    <name type="scientific">Escherichia coli O157:H7</name>
    <dbReference type="NCBI Taxonomy" id="83334"/>
    <lineage>
        <taxon>Bacteria</taxon>
        <taxon>Pseudomonadati</taxon>
        <taxon>Pseudomonadota</taxon>
        <taxon>Gammaproteobacteria</taxon>
        <taxon>Enterobacterales</taxon>
        <taxon>Enterobacteriaceae</taxon>
        <taxon>Escherichia</taxon>
    </lineage>
</organism>
<feature type="signal peptide" evidence="1">
    <location>
        <begin position="1"/>
        <end position="21"/>
    </location>
</feature>
<feature type="chain" id="PRO_0000021044" description="Cation efflux system protein CusF">
    <location>
        <begin position="22"/>
        <end position="110"/>
    </location>
</feature>
<evidence type="ECO:0000250" key="1"/>
<evidence type="ECO:0000305" key="2"/>
<name>CUSF_ECO57</name>